<proteinExistence type="inferred from homology"/>
<protein>
    <recommendedName>
        <fullName evidence="1">Protein-glutamate methylesterase/protein-glutamine glutaminase</fullName>
        <ecNumber evidence="1">3.1.1.61</ecNumber>
        <ecNumber evidence="1">3.5.1.44</ecNumber>
    </recommendedName>
</protein>
<organism>
    <name type="scientific">Methanococcoides burtonii (strain DSM 6242 / NBRC 107633 / OCM 468 / ACE-M)</name>
    <dbReference type="NCBI Taxonomy" id="259564"/>
    <lineage>
        <taxon>Archaea</taxon>
        <taxon>Methanobacteriati</taxon>
        <taxon>Methanobacteriota</taxon>
        <taxon>Stenosarchaea group</taxon>
        <taxon>Methanomicrobia</taxon>
        <taxon>Methanosarcinales</taxon>
        <taxon>Methanosarcinaceae</taxon>
        <taxon>Methanococcoides</taxon>
    </lineage>
</organism>
<gene>
    <name evidence="1" type="primary">cheB</name>
    <name type="ordered locus">Mbur_0360</name>
</gene>
<accession>Q12YX1</accession>
<evidence type="ECO:0000255" key="1">
    <source>
        <dbReference type="HAMAP-Rule" id="MF_00099"/>
    </source>
</evidence>
<comment type="function">
    <text evidence="1">Involved in chemotaxis. Part of a chemotaxis signal transduction system that modulates chemotaxis in response to various stimuli. Catalyzes the demethylation of specific methylglutamate residues introduced into the chemoreceptors (methyl-accepting chemotaxis proteins or MCP) by CheR. Also mediates the irreversible deamidation of specific glutamine residues to glutamic acid.</text>
</comment>
<comment type="catalytic activity">
    <reaction evidence="1">
        <text>[protein]-L-glutamate 5-O-methyl ester + H2O = L-glutamyl-[protein] + methanol + H(+)</text>
        <dbReference type="Rhea" id="RHEA:23236"/>
        <dbReference type="Rhea" id="RHEA-COMP:10208"/>
        <dbReference type="Rhea" id="RHEA-COMP:10311"/>
        <dbReference type="ChEBI" id="CHEBI:15377"/>
        <dbReference type="ChEBI" id="CHEBI:15378"/>
        <dbReference type="ChEBI" id="CHEBI:17790"/>
        <dbReference type="ChEBI" id="CHEBI:29973"/>
        <dbReference type="ChEBI" id="CHEBI:82795"/>
        <dbReference type="EC" id="3.1.1.61"/>
    </reaction>
</comment>
<comment type="catalytic activity">
    <reaction evidence="1">
        <text>L-glutaminyl-[protein] + H2O = L-glutamyl-[protein] + NH4(+)</text>
        <dbReference type="Rhea" id="RHEA:16441"/>
        <dbReference type="Rhea" id="RHEA-COMP:10207"/>
        <dbReference type="Rhea" id="RHEA-COMP:10208"/>
        <dbReference type="ChEBI" id="CHEBI:15377"/>
        <dbReference type="ChEBI" id="CHEBI:28938"/>
        <dbReference type="ChEBI" id="CHEBI:29973"/>
        <dbReference type="ChEBI" id="CHEBI:30011"/>
        <dbReference type="EC" id="3.5.1.44"/>
    </reaction>
</comment>
<comment type="subcellular location">
    <subcellularLocation>
        <location evidence="1">Cytoplasm</location>
    </subcellularLocation>
</comment>
<comment type="domain">
    <text evidence="1">Contains a C-terminal catalytic domain, and an N-terminal region which modulates catalytic activity.</text>
</comment>
<comment type="PTM">
    <text evidence="1">Phosphorylated by CheA. Phosphorylation of the N-terminal regulatory domain activates the methylesterase activity.</text>
</comment>
<comment type="similarity">
    <text evidence="1">Belongs to the CheB family.</text>
</comment>
<feature type="chain" id="PRO_0000264337" description="Protein-glutamate methylesterase/protein-glutamine glutaminase">
    <location>
        <begin position="1"/>
        <end position="351"/>
    </location>
</feature>
<feature type="domain" description="Response regulatory" evidence="1">
    <location>
        <begin position="3"/>
        <end position="120"/>
    </location>
</feature>
<feature type="domain" description="CheB-type methylesterase" evidence="1">
    <location>
        <begin position="160"/>
        <end position="347"/>
    </location>
</feature>
<feature type="active site" evidence="1">
    <location>
        <position position="165"/>
    </location>
</feature>
<feature type="active site" evidence="1">
    <location>
        <position position="192"/>
    </location>
</feature>
<feature type="active site" evidence="1">
    <location>
        <position position="289"/>
    </location>
</feature>
<feature type="modified residue" description="4-aspartylphosphate" evidence="1">
    <location>
        <position position="54"/>
    </location>
</feature>
<keyword id="KW-0145">Chemotaxis</keyword>
<keyword id="KW-0963">Cytoplasm</keyword>
<keyword id="KW-0378">Hydrolase</keyword>
<keyword id="KW-0597">Phosphoprotein</keyword>
<reference key="1">
    <citation type="journal article" date="2009" name="ISME J.">
        <title>The genome sequence of the psychrophilic archaeon, Methanococcoides burtonii: the role of genome evolution in cold adaptation.</title>
        <authorList>
            <person name="Allen M.A."/>
            <person name="Lauro F.M."/>
            <person name="Williams T.J."/>
            <person name="Burg D."/>
            <person name="Siddiqui K.S."/>
            <person name="De Francisci D."/>
            <person name="Chong K.W."/>
            <person name="Pilak O."/>
            <person name="Chew H.H."/>
            <person name="De Maere M.Z."/>
            <person name="Ting L."/>
            <person name="Katrib M."/>
            <person name="Ng C."/>
            <person name="Sowers K.R."/>
            <person name="Galperin M.Y."/>
            <person name="Anderson I.J."/>
            <person name="Ivanova N."/>
            <person name="Dalin E."/>
            <person name="Martinez M."/>
            <person name="Lapidus A."/>
            <person name="Hauser L."/>
            <person name="Land M."/>
            <person name="Thomas T."/>
            <person name="Cavicchioli R."/>
        </authorList>
    </citation>
    <scope>NUCLEOTIDE SEQUENCE [LARGE SCALE GENOMIC DNA]</scope>
    <source>
        <strain>DSM 6242 / NBRC 107633 / OCM 468 / ACE-M</strain>
    </source>
</reference>
<dbReference type="EC" id="3.1.1.61" evidence="1"/>
<dbReference type="EC" id="3.5.1.44" evidence="1"/>
<dbReference type="EMBL" id="CP000300">
    <property type="protein sequence ID" value="ABE51355.1"/>
    <property type="molecule type" value="Genomic_DNA"/>
</dbReference>
<dbReference type="RefSeq" id="WP_011498517.1">
    <property type="nucleotide sequence ID" value="NC_007955.1"/>
</dbReference>
<dbReference type="SMR" id="Q12YX1"/>
<dbReference type="STRING" id="259564.Mbur_0360"/>
<dbReference type="GeneID" id="3998724"/>
<dbReference type="KEGG" id="mbu:Mbur_0360"/>
<dbReference type="HOGENOM" id="CLU_000445_51_0_2"/>
<dbReference type="OrthoDB" id="2857at2157"/>
<dbReference type="Proteomes" id="UP000001979">
    <property type="component" value="Chromosome"/>
</dbReference>
<dbReference type="GO" id="GO:0005737">
    <property type="term" value="C:cytoplasm"/>
    <property type="evidence" value="ECO:0007669"/>
    <property type="project" value="UniProtKB-SubCell"/>
</dbReference>
<dbReference type="GO" id="GO:0000156">
    <property type="term" value="F:phosphorelay response regulator activity"/>
    <property type="evidence" value="ECO:0007669"/>
    <property type="project" value="InterPro"/>
</dbReference>
<dbReference type="GO" id="GO:0008984">
    <property type="term" value="F:protein-glutamate methylesterase activity"/>
    <property type="evidence" value="ECO:0007669"/>
    <property type="project" value="UniProtKB-UniRule"/>
</dbReference>
<dbReference type="GO" id="GO:0050568">
    <property type="term" value="F:protein-glutamine glutaminase activity"/>
    <property type="evidence" value="ECO:0007669"/>
    <property type="project" value="UniProtKB-UniRule"/>
</dbReference>
<dbReference type="GO" id="GO:0006935">
    <property type="term" value="P:chemotaxis"/>
    <property type="evidence" value="ECO:0007669"/>
    <property type="project" value="UniProtKB-UniRule"/>
</dbReference>
<dbReference type="CDD" id="cd16432">
    <property type="entry name" value="CheB_Rec"/>
    <property type="match status" value="1"/>
</dbReference>
<dbReference type="CDD" id="cd17541">
    <property type="entry name" value="REC_CheB-like"/>
    <property type="match status" value="1"/>
</dbReference>
<dbReference type="Gene3D" id="3.40.50.2300">
    <property type="match status" value="1"/>
</dbReference>
<dbReference type="Gene3D" id="3.40.50.180">
    <property type="entry name" value="Methylesterase CheB, C-terminal domain"/>
    <property type="match status" value="1"/>
</dbReference>
<dbReference type="HAMAP" id="MF_00099">
    <property type="entry name" value="CheB_chemtxs"/>
    <property type="match status" value="1"/>
</dbReference>
<dbReference type="InterPro" id="IPR008248">
    <property type="entry name" value="CheB-like"/>
</dbReference>
<dbReference type="InterPro" id="IPR035909">
    <property type="entry name" value="CheB_C"/>
</dbReference>
<dbReference type="InterPro" id="IPR011006">
    <property type="entry name" value="CheY-like_superfamily"/>
</dbReference>
<dbReference type="InterPro" id="IPR000673">
    <property type="entry name" value="Sig_transdc_resp-reg_Me-estase"/>
</dbReference>
<dbReference type="InterPro" id="IPR001789">
    <property type="entry name" value="Sig_transdc_resp-reg_receiver"/>
</dbReference>
<dbReference type="NCBIfam" id="NF001965">
    <property type="entry name" value="PRK00742.1"/>
    <property type="match status" value="1"/>
</dbReference>
<dbReference type="PANTHER" id="PTHR42872">
    <property type="entry name" value="PROTEIN-GLUTAMATE METHYLESTERASE/PROTEIN-GLUTAMINE GLUTAMINASE"/>
    <property type="match status" value="1"/>
</dbReference>
<dbReference type="PANTHER" id="PTHR42872:SF6">
    <property type="entry name" value="PROTEIN-GLUTAMATE METHYLESTERASE_PROTEIN-GLUTAMINE GLUTAMINASE"/>
    <property type="match status" value="1"/>
</dbReference>
<dbReference type="Pfam" id="PF01339">
    <property type="entry name" value="CheB_methylest"/>
    <property type="match status" value="1"/>
</dbReference>
<dbReference type="Pfam" id="PF00072">
    <property type="entry name" value="Response_reg"/>
    <property type="match status" value="1"/>
</dbReference>
<dbReference type="PIRSF" id="PIRSF000876">
    <property type="entry name" value="RR_chemtxs_CheB"/>
    <property type="match status" value="1"/>
</dbReference>
<dbReference type="SMART" id="SM00448">
    <property type="entry name" value="REC"/>
    <property type="match status" value="1"/>
</dbReference>
<dbReference type="SUPFAM" id="SSF52172">
    <property type="entry name" value="CheY-like"/>
    <property type="match status" value="1"/>
</dbReference>
<dbReference type="SUPFAM" id="SSF52738">
    <property type="entry name" value="Methylesterase CheB, C-terminal domain"/>
    <property type="match status" value="1"/>
</dbReference>
<dbReference type="PROSITE" id="PS50122">
    <property type="entry name" value="CHEB"/>
    <property type="match status" value="1"/>
</dbReference>
<dbReference type="PROSITE" id="PS50110">
    <property type="entry name" value="RESPONSE_REGULATORY"/>
    <property type="match status" value="1"/>
</dbReference>
<name>CHEB_METBU</name>
<sequence length="351" mass="37928">MIKTLVVDDSALMRRAIRDMLESADDIEVIGTAKNGKEAVENTNKLKPEVIVMDVNMPIMDGLAAVKAIMKTTPIPIIMFSSLTKKGSIEALEALRLGAIDFITKPSGLQEISKIENELVTKVRNLYNSNVNIIRLLNLKKFKGEVINGNWNCPDQNLGILIGSSTGGPSSLEQIIPRLPGDLPASVFIVQHMPEGNFCSQLAARLDAISELEVKEAENNEKVKIGVAYIAPGGYHMEIRKALDVTRIKIIKGKPMHAVMPSVDVTVESFVKVYGNNSVAIILTGMGVDGASGFKKINESNGATIACSEDTCVVFGMPKAAIEAGAIDVVKPIFEIPEQIVRMIEVKCNGN</sequence>